<name>ENGB_STRPC</name>
<sequence length="199" mass="22507">MAEEQVLNTHNASILLSAANKSHYPQDDLPEIALAGRSNVGKSSFINTILGRKNLARTSSKPGKTQLLNFFNIDDKLRFVDVPGYGYAKVSKSERAKWGKMIEEYLTTRDNLRAVVSLVDLRHAPSKEDIQMYDFLKYYDIPVIVVATKADKIPRGKWNKHESVVKKALNFDKSDTFIVFSSVERIGIDDSWDAILEQV</sequence>
<comment type="function">
    <text evidence="1">Necessary for normal cell division and for the maintenance of normal septation.</text>
</comment>
<comment type="cofactor">
    <cofactor evidence="1">
        <name>Mg(2+)</name>
        <dbReference type="ChEBI" id="CHEBI:18420"/>
    </cofactor>
</comment>
<comment type="similarity">
    <text evidence="1">Belongs to the TRAFAC class TrmE-Era-EngA-EngB-Septin-like GTPase superfamily. EngB GTPase family.</text>
</comment>
<dbReference type="EMBL" id="CP000259">
    <property type="protein sequence ID" value="ABF31936.1"/>
    <property type="molecule type" value="Genomic_DNA"/>
</dbReference>
<dbReference type="SMR" id="Q1JM76"/>
<dbReference type="KEGG" id="spk:MGAS9429_Spy0748"/>
<dbReference type="HOGENOM" id="CLU_033732_3_0_9"/>
<dbReference type="Proteomes" id="UP000002433">
    <property type="component" value="Chromosome"/>
</dbReference>
<dbReference type="GO" id="GO:0005829">
    <property type="term" value="C:cytosol"/>
    <property type="evidence" value="ECO:0007669"/>
    <property type="project" value="TreeGrafter"/>
</dbReference>
<dbReference type="GO" id="GO:0005525">
    <property type="term" value="F:GTP binding"/>
    <property type="evidence" value="ECO:0007669"/>
    <property type="project" value="UniProtKB-UniRule"/>
</dbReference>
<dbReference type="GO" id="GO:0046872">
    <property type="term" value="F:metal ion binding"/>
    <property type="evidence" value="ECO:0007669"/>
    <property type="project" value="UniProtKB-KW"/>
</dbReference>
<dbReference type="GO" id="GO:0000917">
    <property type="term" value="P:division septum assembly"/>
    <property type="evidence" value="ECO:0007669"/>
    <property type="project" value="UniProtKB-KW"/>
</dbReference>
<dbReference type="CDD" id="cd01876">
    <property type="entry name" value="YihA_EngB"/>
    <property type="match status" value="1"/>
</dbReference>
<dbReference type="FunFam" id="3.40.50.300:FF:000098">
    <property type="entry name" value="Probable GTP-binding protein EngB"/>
    <property type="match status" value="1"/>
</dbReference>
<dbReference type="Gene3D" id="3.40.50.300">
    <property type="entry name" value="P-loop containing nucleotide triphosphate hydrolases"/>
    <property type="match status" value="1"/>
</dbReference>
<dbReference type="HAMAP" id="MF_00321">
    <property type="entry name" value="GTPase_EngB"/>
    <property type="match status" value="1"/>
</dbReference>
<dbReference type="InterPro" id="IPR030393">
    <property type="entry name" value="G_ENGB_dom"/>
</dbReference>
<dbReference type="InterPro" id="IPR006073">
    <property type="entry name" value="GTP-bd"/>
</dbReference>
<dbReference type="InterPro" id="IPR019987">
    <property type="entry name" value="GTP-bd_ribosome_bio_YsxC"/>
</dbReference>
<dbReference type="InterPro" id="IPR027417">
    <property type="entry name" value="P-loop_NTPase"/>
</dbReference>
<dbReference type="InterPro" id="IPR005225">
    <property type="entry name" value="Small_GTP-bd"/>
</dbReference>
<dbReference type="NCBIfam" id="TIGR03598">
    <property type="entry name" value="GTPase_YsxC"/>
    <property type="match status" value="1"/>
</dbReference>
<dbReference type="NCBIfam" id="TIGR00231">
    <property type="entry name" value="small_GTP"/>
    <property type="match status" value="1"/>
</dbReference>
<dbReference type="PANTHER" id="PTHR11649:SF13">
    <property type="entry name" value="ENGB-TYPE G DOMAIN-CONTAINING PROTEIN"/>
    <property type="match status" value="1"/>
</dbReference>
<dbReference type="PANTHER" id="PTHR11649">
    <property type="entry name" value="MSS1/TRME-RELATED GTP-BINDING PROTEIN"/>
    <property type="match status" value="1"/>
</dbReference>
<dbReference type="Pfam" id="PF01926">
    <property type="entry name" value="MMR_HSR1"/>
    <property type="match status" value="1"/>
</dbReference>
<dbReference type="SUPFAM" id="SSF52540">
    <property type="entry name" value="P-loop containing nucleoside triphosphate hydrolases"/>
    <property type="match status" value="1"/>
</dbReference>
<dbReference type="PROSITE" id="PS51706">
    <property type="entry name" value="G_ENGB"/>
    <property type="match status" value="1"/>
</dbReference>
<proteinExistence type="inferred from homology"/>
<gene>
    <name evidence="1" type="primary">engB</name>
    <name type="ordered locus">MGAS9429_Spy0748</name>
</gene>
<reference key="1">
    <citation type="journal article" date="2006" name="Proc. Natl. Acad. Sci. U.S.A.">
        <title>Molecular genetic anatomy of inter- and intraserotype variation in the human bacterial pathogen group A Streptococcus.</title>
        <authorList>
            <person name="Beres S.B."/>
            <person name="Richter E.W."/>
            <person name="Nagiec M.J."/>
            <person name="Sumby P."/>
            <person name="Porcella S.F."/>
            <person name="DeLeo F.R."/>
            <person name="Musser J.M."/>
        </authorList>
    </citation>
    <scope>NUCLEOTIDE SEQUENCE [LARGE SCALE GENOMIC DNA]</scope>
    <source>
        <strain>MGAS9429</strain>
    </source>
</reference>
<protein>
    <recommendedName>
        <fullName evidence="1">Probable GTP-binding protein EngB</fullName>
    </recommendedName>
</protein>
<accession>Q1JM76</accession>
<keyword id="KW-0131">Cell cycle</keyword>
<keyword id="KW-0132">Cell division</keyword>
<keyword id="KW-0342">GTP-binding</keyword>
<keyword id="KW-0460">Magnesium</keyword>
<keyword id="KW-0479">Metal-binding</keyword>
<keyword id="KW-0547">Nucleotide-binding</keyword>
<keyword id="KW-0717">Septation</keyword>
<feature type="chain" id="PRO_0000266965" description="Probable GTP-binding protein EngB">
    <location>
        <begin position="1"/>
        <end position="199"/>
    </location>
</feature>
<feature type="domain" description="EngB-type G" evidence="1">
    <location>
        <begin position="28"/>
        <end position="199"/>
    </location>
</feature>
<feature type="binding site" evidence="1">
    <location>
        <begin position="36"/>
        <end position="43"/>
    </location>
    <ligand>
        <name>GTP</name>
        <dbReference type="ChEBI" id="CHEBI:37565"/>
    </ligand>
</feature>
<feature type="binding site" evidence="1">
    <location>
        <position position="43"/>
    </location>
    <ligand>
        <name>Mg(2+)</name>
        <dbReference type="ChEBI" id="CHEBI:18420"/>
    </ligand>
</feature>
<feature type="binding site" evidence="1">
    <location>
        <begin position="63"/>
        <end position="67"/>
    </location>
    <ligand>
        <name>GTP</name>
        <dbReference type="ChEBI" id="CHEBI:37565"/>
    </ligand>
</feature>
<feature type="binding site" evidence="1">
    <location>
        <position position="65"/>
    </location>
    <ligand>
        <name>Mg(2+)</name>
        <dbReference type="ChEBI" id="CHEBI:18420"/>
    </ligand>
</feature>
<feature type="binding site" evidence="1">
    <location>
        <begin position="81"/>
        <end position="84"/>
    </location>
    <ligand>
        <name>GTP</name>
        <dbReference type="ChEBI" id="CHEBI:37565"/>
    </ligand>
</feature>
<feature type="binding site" evidence="1">
    <location>
        <begin position="148"/>
        <end position="151"/>
    </location>
    <ligand>
        <name>GTP</name>
        <dbReference type="ChEBI" id="CHEBI:37565"/>
    </ligand>
</feature>
<feature type="binding site" evidence="1">
    <location>
        <begin position="180"/>
        <end position="182"/>
    </location>
    <ligand>
        <name>GTP</name>
        <dbReference type="ChEBI" id="CHEBI:37565"/>
    </ligand>
</feature>
<evidence type="ECO:0000255" key="1">
    <source>
        <dbReference type="HAMAP-Rule" id="MF_00321"/>
    </source>
</evidence>
<organism>
    <name type="scientific">Streptococcus pyogenes serotype M12 (strain MGAS9429)</name>
    <dbReference type="NCBI Taxonomy" id="370551"/>
    <lineage>
        <taxon>Bacteria</taxon>
        <taxon>Bacillati</taxon>
        <taxon>Bacillota</taxon>
        <taxon>Bacilli</taxon>
        <taxon>Lactobacillales</taxon>
        <taxon>Streptococcaceae</taxon>
        <taxon>Streptococcus</taxon>
    </lineage>
</organism>